<accession>B7V637</accession>
<comment type="function">
    <text evidence="1">DNA-dependent RNA polymerase catalyzes the transcription of DNA into RNA using the four ribonucleoside triphosphates as substrates.</text>
</comment>
<comment type="catalytic activity">
    <reaction evidence="1">
        <text>RNA(n) + a ribonucleoside 5'-triphosphate = RNA(n+1) + diphosphate</text>
        <dbReference type="Rhea" id="RHEA:21248"/>
        <dbReference type="Rhea" id="RHEA-COMP:14527"/>
        <dbReference type="Rhea" id="RHEA-COMP:17342"/>
        <dbReference type="ChEBI" id="CHEBI:33019"/>
        <dbReference type="ChEBI" id="CHEBI:61557"/>
        <dbReference type="ChEBI" id="CHEBI:140395"/>
        <dbReference type="EC" id="2.7.7.6"/>
    </reaction>
</comment>
<comment type="subunit">
    <text evidence="1">The RNAP catalytic core consists of 2 alpha, 1 beta, 1 beta' and 1 omega subunit. When a sigma factor is associated with the core the holoenzyme is formed, which can initiate transcription.</text>
</comment>
<comment type="similarity">
    <text evidence="1">Belongs to the RNA polymerase beta chain family.</text>
</comment>
<name>RPOB_PSEA8</name>
<reference key="1">
    <citation type="journal article" date="2009" name="Genome Res.">
        <title>Newly introduced genomic prophage islands are critical determinants of in vivo competitiveness in the Liverpool epidemic strain of Pseudomonas aeruginosa.</title>
        <authorList>
            <person name="Winstanley C."/>
            <person name="Langille M.G.I."/>
            <person name="Fothergill J.L."/>
            <person name="Kukavica-Ibrulj I."/>
            <person name="Paradis-Bleau C."/>
            <person name="Sanschagrin F."/>
            <person name="Thomson N.R."/>
            <person name="Winsor G.L."/>
            <person name="Quail M.A."/>
            <person name="Lennard N."/>
            <person name="Bignell A."/>
            <person name="Clarke L."/>
            <person name="Seeger K."/>
            <person name="Saunders D."/>
            <person name="Harris D."/>
            <person name="Parkhill J."/>
            <person name="Hancock R.E.W."/>
            <person name="Brinkman F.S.L."/>
            <person name="Levesque R.C."/>
        </authorList>
    </citation>
    <scope>NUCLEOTIDE SEQUENCE [LARGE SCALE GENOMIC DNA]</scope>
    <source>
        <strain>LESB58</strain>
    </source>
</reference>
<evidence type="ECO:0000255" key="1">
    <source>
        <dbReference type="HAMAP-Rule" id="MF_01321"/>
    </source>
</evidence>
<protein>
    <recommendedName>
        <fullName evidence="1">DNA-directed RNA polymerase subunit beta</fullName>
        <shortName evidence="1">RNAP subunit beta</shortName>
        <ecNumber evidence="1">2.7.7.6</ecNumber>
    </recommendedName>
    <alternativeName>
        <fullName evidence="1">RNA polymerase subunit beta</fullName>
    </alternativeName>
    <alternativeName>
        <fullName evidence="1">Transcriptase subunit beta</fullName>
    </alternativeName>
</protein>
<keyword id="KW-0240">DNA-directed RNA polymerase</keyword>
<keyword id="KW-0548">Nucleotidyltransferase</keyword>
<keyword id="KW-0804">Transcription</keyword>
<keyword id="KW-0808">Transferase</keyword>
<dbReference type="EC" id="2.7.7.6" evidence="1"/>
<dbReference type="EMBL" id="FM209186">
    <property type="protein sequence ID" value="CAW25385.1"/>
    <property type="molecule type" value="Genomic_DNA"/>
</dbReference>
<dbReference type="RefSeq" id="WP_003093746.1">
    <property type="nucleotide sequence ID" value="NC_011770.1"/>
</dbReference>
<dbReference type="SMR" id="B7V637"/>
<dbReference type="KEGG" id="pag:PLES_06581"/>
<dbReference type="HOGENOM" id="CLU_000524_4_0_6"/>
<dbReference type="GO" id="GO:0000428">
    <property type="term" value="C:DNA-directed RNA polymerase complex"/>
    <property type="evidence" value="ECO:0007669"/>
    <property type="project" value="UniProtKB-KW"/>
</dbReference>
<dbReference type="GO" id="GO:0003677">
    <property type="term" value="F:DNA binding"/>
    <property type="evidence" value="ECO:0007669"/>
    <property type="project" value="UniProtKB-UniRule"/>
</dbReference>
<dbReference type="GO" id="GO:0003899">
    <property type="term" value="F:DNA-directed RNA polymerase activity"/>
    <property type="evidence" value="ECO:0007669"/>
    <property type="project" value="UniProtKB-UniRule"/>
</dbReference>
<dbReference type="GO" id="GO:0032549">
    <property type="term" value="F:ribonucleoside binding"/>
    <property type="evidence" value="ECO:0007669"/>
    <property type="project" value="InterPro"/>
</dbReference>
<dbReference type="GO" id="GO:0006351">
    <property type="term" value="P:DNA-templated transcription"/>
    <property type="evidence" value="ECO:0007669"/>
    <property type="project" value="UniProtKB-UniRule"/>
</dbReference>
<dbReference type="CDD" id="cd00653">
    <property type="entry name" value="RNA_pol_B_RPB2"/>
    <property type="match status" value="1"/>
</dbReference>
<dbReference type="FunFam" id="2.40.50.100:FF:000006">
    <property type="entry name" value="DNA-directed RNA polymerase subunit beta"/>
    <property type="match status" value="1"/>
</dbReference>
<dbReference type="FunFam" id="2.40.50.150:FF:000001">
    <property type="entry name" value="DNA-directed RNA polymerase subunit beta"/>
    <property type="match status" value="1"/>
</dbReference>
<dbReference type="FunFam" id="3.90.1110.10:FF:000001">
    <property type="entry name" value="DNA-directed RNA polymerase subunit beta"/>
    <property type="match status" value="1"/>
</dbReference>
<dbReference type="FunFam" id="3.90.1110.10:FF:000004">
    <property type="entry name" value="DNA-directed RNA polymerase subunit beta"/>
    <property type="match status" value="1"/>
</dbReference>
<dbReference type="FunFam" id="3.90.1800.10:FF:000001">
    <property type="entry name" value="DNA-directed RNA polymerase subunit beta"/>
    <property type="match status" value="1"/>
</dbReference>
<dbReference type="Gene3D" id="2.40.50.100">
    <property type="match status" value="1"/>
</dbReference>
<dbReference type="Gene3D" id="2.40.50.150">
    <property type="match status" value="1"/>
</dbReference>
<dbReference type="Gene3D" id="3.90.1100.10">
    <property type="match status" value="2"/>
</dbReference>
<dbReference type="Gene3D" id="6.10.140.1670">
    <property type="match status" value="1"/>
</dbReference>
<dbReference type="Gene3D" id="2.30.150.10">
    <property type="entry name" value="DNA-directed RNA polymerase, beta subunit, external 1 domain"/>
    <property type="match status" value="1"/>
</dbReference>
<dbReference type="Gene3D" id="2.40.270.10">
    <property type="entry name" value="DNA-directed RNA polymerase, subunit 2, domain 6"/>
    <property type="match status" value="1"/>
</dbReference>
<dbReference type="Gene3D" id="3.90.1800.10">
    <property type="entry name" value="RNA polymerase alpha subunit dimerisation domain"/>
    <property type="match status" value="1"/>
</dbReference>
<dbReference type="Gene3D" id="3.90.1110.10">
    <property type="entry name" value="RNA polymerase Rpb2, domain 2"/>
    <property type="match status" value="1"/>
</dbReference>
<dbReference type="HAMAP" id="MF_01321">
    <property type="entry name" value="RNApol_bact_RpoB"/>
    <property type="match status" value="1"/>
</dbReference>
<dbReference type="InterPro" id="IPR042107">
    <property type="entry name" value="DNA-dir_RNA_pol_bsu_ext_1_sf"/>
</dbReference>
<dbReference type="InterPro" id="IPR019462">
    <property type="entry name" value="DNA-dir_RNA_pol_bsu_external_1"/>
</dbReference>
<dbReference type="InterPro" id="IPR015712">
    <property type="entry name" value="DNA-dir_RNA_pol_su2"/>
</dbReference>
<dbReference type="InterPro" id="IPR007120">
    <property type="entry name" value="DNA-dir_RNAP_su2_dom"/>
</dbReference>
<dbReference type="InterPro" id="IPR037033">
    <property type="entry name" value="DNA-dir_RNAP_su2_hyb_sf"/>
</dbReference>
<dbReference type="InterPro" id="IPR010243">
    <property type="entry name" value="RNA_pol_bsu_bac"/>
</dbReference>
<dbReference type="InterPro" id="IPR007121">
    <property type="entry name" value="RNA_pol_bsu_CS"/>
</dbReference>
<dbReference type="InterPro" id="IPR007644">
    <property type="entry name" value="RNA_pol_bsu_protrusion"/>
</dbReference>
<dbReference type="InterPro" id="IPR007642">
    <property type="entry name" value="RNA_pol_Rpb2_2"/>
</dbReference>
<dbReference type="InterPro" id="IPR037034">
    <property type="entry name" value="RNA_pol_Rpb2_2_sf"/>
</dbReference>
<dbReference type="InterPro" id="IPR007645">
    <property type="entry name" value="RNA_pol_Rpb2_3"/>
</dbReference>
<dbReference type="InterPro" id="IPR007641">
    <property type="entry name" value="RNA_pol_Rpb2_7"/>
</dbReference>
<dbReference type="InterPro" id="IPR014724">
    <property type="entry name" value="RNA_pol_RPB2_OB-fold"/>
</dbReference>
<dbReference type="NCBIfam" id="NF001616">
    <property type="entry name" value="PRK00405.1"/>
    <property type="match status" value="1"/>
</dbReference>
<dbReference type="NCBIfam" id="TIGR02013">
    <property type="entry name" value="rpoB"/>
    <property type="match status" value="1"/>
</dbReference>
<dbReference type="PANTHER" id="PTHR20856">
    <property type="entry name" value="DNA-DIRECTED RNA POLYMERASE I SUBUNIT 2"/>
    <property type="match status" value="1"/>
</dbReference>
<dbReference type="Pfam" id="PF04563">
    <property type="entry name" value="RNA_pol_Rpb2_1"/>
    <property type="match status" value="1"/>
</dbReference>
<dbReference type="Pfam" id="PF04561">
    <property type="entry name" value="RNA_pol_Rpb2_2"/>
    <property type="match status" value="2"/>
</dbReference>
<dbReference type="Pfam" id="PF04565">
    <property type="entry name" value="RNA_pol_Rpb2_3"/>
    <property type="match status" value="1"/>
</dbReference>
<dbReference type="Pfam" id="PF10385">
    <property type="entry name" value="RNA_pol_Rpb2_45"/>
    <property type="match status" value="1"/>
</dbReference>
<dbReference type="Pfam" id="PF00562">
    <property type="entry name" value="RNA_pol_Rpb2_6"/>
    <property type="match status" value="1"/>
</dbReference>
<dbReference type="Pfam" id="PF04560">
    <property type="entry name" value="RNA_pol_Rpb2_7"/>
    <property type="match status" value="1"/>
</dbReference>
<dbReference type="SUPFAM" id="SSF64484">
    <property type="entry name" value="beta and beta-prime subunits of DNA dependent RNA-polymerase"/>
    <property type="match status" value="1"/>
</dbReference>
<dbReference type="PROSITE" id="PS01166">
    <property type="entry name" value="RNA_POL_BETA"/>
    <property type="match status" value="1"/>
</dbReference>
<sequence length="1357" mass="150852">MAYSYTEKKRIRKDFSKLPDVMDVPYLLAIQLDSYREFLQAGATKEQFRDIGLHAAFKSVFPIISYSGNAALEYVGYRLGEPAFDVKECVLRGVTFAVPLRVKVRLIIFDRESSNKAIKDIKEQEVYMGEIPLMTENGTFIINGTERVIVSQLHRSPGVFFDHDRGKTHSSGKLLYSARIIPYRGSWLDFEFDPKDCVFVRIDRRRKLPASVLLRALGYSTEEILNAFYATNVFHIKGETLNLELVPQRLRGEVASIDIKDGSGKVIVEQGRRITARHINQLEKAGVSQLEVPFDYLIGRTIAKAIVHPATGEIIAECNTELTLDLLAKVAKAQVVRIETLYTNDIDCGPFISDTLKIDNTSNQLEALVEIYRMMRPGEPPTKEAAETLFGNLFFSAERYDLSAVGRMKFNRRIGRTEIEGPGVLSKEDIIDVLKTLVDIRNGKGIVDDIDHLGNRRVRCVGEMAENQFRVGLVRVERAVKERLSMAESEGLMPQDLINAKPVAAAIKEFFGSSQLSQFMDQNNPLSEITHKRRVSALGPGGLTRERAGFEVRDVHPTHYGRVCPIETPEGPNIGLINSLATYARTNKYGFLESPYRVVKDSLVTDEIVFLSAIEEADHVIAQASATLNEKGQLVDELVAVRHLNEFTVKAPEDVTLMDVSPKQVVSVAASLIPFLEHDDANRALMGSNMQRQAVPTLRADKPLVGTGMERNVARDSGVCVVARRGGVIDSVDASRVVVRVADDEVETGEAGVDIYNLTKYTRSNQNTCINQRPLVSKGDVVARGDILADGPSTDMGELALGQNMRVAFMPWNGFNFEDSICLSERVVQEDRFTTIHIQELTCVARDTKLGPEEITADIPNVGEAALNKLDEAGIVYVGAEVQAGDILVGKVTPKGETQLTPEEKLLRAIFGEKASDVKDTSLRVPTGTKGTVIDVQVFTRDGVERDSRALSIEKMQLDQIRKDLNEEFRIVEGATFERLRAALVGAKAEGGPALKKGTEITDDYLDGLERGQWFKLRMADDALNEQLEKAQAYISDRRQLLDDKFEDKKRKLQQGDDLAPGVLKIVKVYLAIKRRIQPGDKMAGRHGNKGVVSVIMPVEDMPHDANGTPVDIVLNPLGVPSRMNVGQILETHLGLAAKGLGEKINRMLEEQRKVAELRKFLHEIYNEIGGREENLDELGDNEILALAKNLRGGVPMATPVFDGAKEREIKAMLKLADLPESGQMRLFDGRTGNQFERPTTVGYMYMLKLNHLVDDKMHARSTGSYSLVTQQPLGGKAQFGGQRFGEMEVWALEAYGAAYTLQEMLTVKSDDVNGRTKMYKNIVDGDHRMEAGMPESFNVLIKEIRSLGIDIELETE</sequence>
<organism>
    <name type="scientific">Pseudomonas aeruginosa (strain LESB58)</name>
    <dbReference type="NCBI Taxonomy" id="557722"/>
    <lineage>
        <taxon>Bacteria</taxon>
        <taxon>Pseudomonadati</taxon>
        <taxon>Pseudomonadota</taxon>
        <taxon>Gammaproteobacteria</taxon>
        <taxon>Pseudomonadales</taxon>
        <taxon>Pseudomonadaceae</taxon>
        <taxon>Pseudomonas</taxon>
    </lineage>
</organism>
<feature type="chain" id="PRO_1000141722" description="DNA-directed RNA polymerase subunit beta">
    <location>
        <begin position="1"/>
        <end position="1357"/>
    </location>
</feature>
<proteinExistence type="inferred from homology"/>
<gene>
    <name evidence="1" type="primary">rpoB</name>
    <name type="ordered locus">PLES_06581</name>
</gene>